<dbReference type="EMBL" id="AF504061">
    <property type="protein sequence ID" value="AAM28877.1"/>
    <property type="molecule type" value="mRNA"/>
</dbReference>
<dbReference type="EMBL" id="AK045186">
    <property type="protein sequence ID" value="BAC32252.1"/>
    <property type="molecule type" value="mRNA"/>
</dbReference>
<dbReference type="EMBL" id="AK081696">
    <property type="protein sequence ID" value="BAC38297.1"/>
    <property type="molecule type" value="mRNA"/>
</dbReference>
<dbReference type="EMBL" id="AK138943">
    <property type="protein sequence ID" value="BAE23828.1"/>
    <property type="molecule type" value="mRNA"/>
</dbReference>
<dbReference type="EMBL" id="BC119198">
    <property type="protein sequence ID" value="AAI19199.1"/>
    <property type="molecule type" value="mRNA"/>
</dbReference>
<dbReference type="EMBL" id="BC120842">
    <property type="protein sequence ID" value="AAI20843.1"/>
    <property type="molecule type" value="mRNA"/>
</dbReference>
<dbReference type="CCDS" id="CCDS27449.1"/>
<dbReference type="RefSeq" id="NP_780665.1">
    <property type="nucleotide sequence ID" value="NM_175456.4"/>
</dbReference>
<dbReference type="SMR" id="Q8BUZ1"/>
<dbReference type="FunCoup" id="Q8BUZ1">
    <property type="interactions" value="101"/>
</dbReference>
<dbReference type="STRING" id="10090.ENSMUSP00000051973"/>
<dbReference type="iPTMnet" id="Q8BUZ1"/>
<dbReference type="PhosphoSitePlus" id="Q8BUZ1"/>
<dbReference type="jPOST" id="Q8BUZ1"/>
<dbReference type="PaxDb" id="10090-ENSMUSP00000051973"/>
<dbReference type="ProteomicsDB" id="286064"/>
<dbReference type="Antibodypedia" id="2925">
    <property type="antibodies" value="97 antibodies from 20 providers"/>
</dbReference>
<dbReference type="Ensembl" id="ENSMUST00000054742.7">
    <property type="protein sequence ID" value="ENSMUSP00000051973.6"/>
    <property type="gene ID" value="ENSMUSG00000042895.7"/>
</dbReference>
<dbReference type="GeneID" id="223513"/>
<dbReference type="KEGG" id="mmu:223513"/>
<dbReference type="UCSC" id="uc007vpb.1">
    <property type="organism name" value="mouse"/>
</dbReference>
<dbReference type="AGR" id="MGI:2444891"/>
<dbReference type="CTD" id="137735"/>
<dbReference type="MGI" id="MGI:2444891">
    <property type="gene designation" value="Abra"/>
</dbReference>
<dbReference type="VEuPathDB" id="HostDB:ENSMUSG00000042895"/>
<dbReference type="eggNOG" id="KOG3376">
    <property type="taxonomic scope" value="Eukaryota"/>
</dbReference>
<dbReference type="GeneTree" id="ENSGT00390000015984"/>
<dbReference type="HOGENOM" id="CLU_062244_0_0_1"/>
<dbReference type="InParanoid" id="Q8BUZ1"/>
<dbReference type="OMA" id="DEPKWRS"/>
<dbReference type="OrthoDB" id="9871914at2759"/>
<dbReference type="PhylomeDB" id="Q8BUZ1"/>
<dbReference type="TreeFam" id="TF328879"/>
<dbReference type="BioGRID-ORCS" id="223513">
    <property type="hits" value="1 hit in 76 CRISPR screens"/>
</dbReference>
<dbReference type="PRO" id="PR:Q8BUZ1"/>
<dbReference type="Proteomes" id="UP000000589">
    <property type="component" value="Chromosome 15"/>
</dbReference>
<dbReference type="RNAct" id="Q8BUZ1">
    <property type="molecule type" value="protein"/>
</dbReference>
<dbReference type="Bgee" id="ENSMUSG00000042895">
    <property type="expression patterns" value="Expressed in interventricular septum and 49 other cell types or tissues"/>
</dbReference>
<dbReference type="GO" id="GO:0015629">
    <property type="term" value="C:actin cytoskeleton"/>
    <property type="evidence" value="ECO:0000314"/>
    <property type="project" value="HGNC-UCL"/>
</dbReference>
<dbReference type="GO" id="GO:0030016">
    <property type="term" value="C:myofibril"/>
    <property type="evidence" value="ECO:0000314"/>
    <property type="project" value="MGI"/>
</dbReference>
<dbReference type="GO" id="GO:0005886">
    <property type="term" value="C:plasma membrane"/>
    <property type="evidence" value="ECO:0007669"/>
    <property type="project" value="Ensembl"/>
</dbReference>
<dbReference type="GO" id="GO:0030017">
    <property type="term" value="C:sarcomere"/>
    <property type="evidence" value="ECO:0000250"/>
    <property type="project" value="HGNC"/>
</dbReference>
<dbReference type="GO" id="GO:0003779">
    <property type="term" value="F:actin binding"/>
    <property type="evidence" value="ECO:0000314"/>
    <property type="project" value="HGNC-UCL"/>
</dbReference>
<dbReference type="GO" id="GO:0030036">
    <property type="term" value="P:actin cytoskeleton organization"/>
    <property type="evidence" value="ECO:0000314"/>
    <property type="project" value="HGNC-UCL"/>
</dbReference>
<dbReference type="GO" id="GO:0045893">
    <property type="term" value="P:positive regulation of DNA-templated transcription"/>
    <property type="evidence" value="ECO:0000314"/>
    <property type="project" value="MGI"/>
</dbReference>
<dbReference type="GO" id="GO:0035025">
    <property type="term" value="P:positive regulation of Rho protein signal transduction"/>
    <property type="evidence" value="ECO:0000314"/>
    <property type="project" value="HGNC-UCL"/>
</dbReference>
<dbReference type="GO" id="GO:0045944">
    <property type="term" value="P:positive regulation of transcription by RNA polymerase II"/>
    <property type="evidence" value="ECO:0000314"/>
    <property type="project" value="MGI"/>
</dbReference>
<dbReference type="GO" id="GO:0006606">
    <property type="term" value="P:protein import into nucleus"/>
    <property type="evidence" value="ECO:0000314"/>
    <property type="project" value="MGI"/>
</dbReference>
<dbReference type="GO" id="GO:0006366">
    <property type="term" value="P:transcription by RNA polymerase II"/>
    <property type="evidence" value="ECO:0000314"/>
    <property type="project" value="MGI"/>
</dbReference>
<dbReference type="FunFam" id="1.10.10.1540:FF:000001">
    <property type="entry name" value="Actin-binding Rho-activating protein a"/>
    <property type="match status" value="1"/>
</dbReference>
<dbReference type="Gene3D" id="1.10.10.1540">
    <property type="entry name" value="Costar domain"/>
    <property type="match status" value="1"/>
</dbReference>
<dbReference type="InterPro" id="IPR026111">
    <property type="entry name" value="Abra"/>
</dbReference>
<dbReference type="InterPro" id="IPR027817">
    <property type="entry name" value="Costars_dom"/>
</dbReference>
<dbReference type="InterPro" id="IPR038095">
    <property type="entry name" value="Costars_sf"/>
</dbReference>
<dbReference type="PANTHER" id="PTHR22739:SF20">
    <property type="entry name" value="ACTIN-BINDING RHO-ACTIVATING PROTEIN"/>
    <property type="match status" value="1"/>
</dbReference>
<dbReference type="PANTHER" id="PTHR22739">
    <property type="entry name" value="STRIATED MUSCLE ACTIVATOR OF RHO-DEPENDENT SIGNALING-RELATED"/>
    <property type="match status" value="1"/>
</dbReference>
<dbReference type="Pfam" id="PF14705">
    <property type="entry name" value="Costars"/>
    <property type="match status" value="1"/>
</dbReference>
<dbReference type="SMART" id="SM01283">
    <property type="entry name" value="Costars"/>
    <property type="match status" value="1"/>
</dbReference>
<protein>
    <recommendedName>
        <fullName>Actin-binding Rho-activating protein</fullName>
    </recommendedName>
    <alternativeName>
        <fullName>Striated muscle activator of Rho-dependent signaling</fullName>
        <shortName>STARS</shortName>
    </alternativeName>
</protein>
<sequence length="375" mass="42831">MAPGEREREAGPAKSALRKVRTATLVINLARGWQQWANENSTKQAQEPAGWLPGATHDLPNAPKEAGPYQHAPKTLSPKPDRDGEGQHSEEATEVSHIKRKEVTRTVVSKAYERGGDVNYLSHRYENDGGVSEAIQPENDIDRILLSHDSPTRRRKCTNLVSELTKGWKVMEQEEPTWKSDSVDTEDSGYGGDMEERPEQDAAPVAPARIKRPLLSQANRYSETLNCKAHRKYSQVDNLKGRWQQWADEHVQSQKLNPFSDEFDYDLAMSTRLHKGDEGYGRPKEGSKTAERAKRAEEHIYREIMELCFVIRTMARHRRDGKIQVTFGELFDRYVRISDKVVGILMRARKHGLVHFEGEMLWQGRDDHVVITLLE</sequence>
<proteinExistence type="evidence at protein level"/>
<accession>Q8BUZ1</accession>
<accession>Q0VB05</accession>
<accession>Q3UU01</accession>
<accession>Q8BLH3</accession>
<accession>Q8K431</accession>
<evidence type="ECO:0000250" key="1"/>
<evidence type="ECO:0000250" key="2">
    <source>
        <dbReference type="UniProtKB" id="Q8K4K7"/>
    </source>
</evidence>
<evidence type="ECO:0000256" key="3">
    <source>
        <dbReference type="SAM" id="MobiDB-lite"/>
    </source>
</evidence>
<evidence type="ECO:0000269" key="4">
    <source>
    </source>
</evidence>
<evidence type="ECO:0000269" key="5">
    <source>
    </source>
</evidence>
<evidence type="ECO:0000305" key="6"/>
<evidence type="ECO:0000312" key="7">
    <source>
        <dbReference type="EMBL" id="AAM28877.1"/>
    </source>
</evidence>
<evidence type="ECO:0000312" key="8">
    <source>
        <dbReference type="EMBL" id="BAC32252.1"/>
    </source>
</evidence>
<evidence type="ECO:0000312" key="9">
    <source>
        <dbReference type="EMBL" id="BAC38297.1"/>
    </source>
</evidence>
<evidence type="ECO:0000312" key="10">
    <source>
        <dbReference type="MGI" id="MGI:2444891"/>
    </source>
</evidence>
<feature type="chain" id="PRO_0000247740" description="Actin-binding Rho-activating protein">
    <location>
        <begin position="1"/>
        <end position="375"/>
    </location>
</feature>
<feature type="region of interest" description="Disordered" evidence="3">
    <location>
        <begin position="1"/>
        <end position="20"/>
    </location>
</feature>
<feature type="region of interest" description="Disordered" evidence="3">
    <location>
        <begin position="38"/>
        <end position="99"/>
    </location>
</feature>
<feature type="region of interest" description="Disordered" evidence="3">
    <location>
        <begin position="173"/>
        <end position="204"/>
    </location>
</feature>
<feature type="region of interest" description="Actin-binding 1" evidence="1">
    <location>
        <begin position="193"/>
        <end position="293"/>
    </location>
</feature>
<feature type="region of interest" description="Interaction with actin" evidence="4">
    <location>
        <begin position="234"/>
        <end position="279"/>
    </location>
</feature>
<feature type="region of interest" description="Actin-binding 2" evidence="1">
    <location>
        <begin position="294"/>
        <end position="375"/>
    </location>
</feature>
<feature type="region of interest" description="Interaction with actin" evidence="4">
    <location>
        <begin position="346"/>
        <end position="375"/>
    </location>
</feature>
<feature type="compositionally biased region" description="Basic and acidic residues" evidence="3">
    <location>
        <begin position="1"/>
        <end position="11"/>
    </location>
</feature>
<feature type="compositionally biased region" description="Basic and acidic residues" evidence="3">
    <location>
        <begin position="79"/>
        <end position="99"/>
    </location>
</feature>
<feature type="compositionally biased region" description="Basic and acidic residues" evidence="3">
    <location>
        <begin position="173"/>
        <end position="182"/>
    </location>
</feature>
<feature type="modified residue" description="Phosphoserine" evidence="2">
    <location>
        <position position="150"/>
    </location>
</feature>
<feature type="modified residue" description="Phosphoserine" evidence="2">
    <location>
        <position position="182"/>
    </location>
</feature>
<feature type="sequence conflict" description="In Ref. 1; AAM28877." evidence="6" ref="1">
    <original>L</original>
    <variation>V</variation>
    <location>
        <position position="59"/>
    </location>
</feature>
<feature type="sequence conflict" description="In Ref. 1; AAM28877." evidence="6" ref="1">
    <original>L</original>
    <variation>H</variation>
    <location>
        <position position="215"/>
    </location>
</feature>
<feature type="sequence conflict" description="In Ref. 1; AAM28877." evidence="6" ref="1">
    <original>T</original>
    <variation>P</variation>
    <location>
        <position position="224"/>
    </location>
</feature>
<feature type="sequence conflict" description="In Ref. 1; AAM28877." evidence="6" ref="1">
    <original>L</original>
    <variation>V</variation>
    <location>
        <position position="374"/>
    </location>
</feature>
<comment type="function">
    <text evidence="4 5">Acts as an activator of serum response factor (SRF)-dependent transcription possibly by inducing nuclear translocation of MKL1 or MKL2 and through a mechanism requiring Rho-actin signaling.</text>
</comment>
<comment type="subunit">
    <text>Binds F-actin and ABLIM1, ABLIM2 and ABLIM3. Interaction with ABLIM2 and ABLIM3 enhances activity.</text>
</comment>
<comment type="subcellular location">
    <subcellularLocation>
        <location evidence="1">Cytoplasm</location>
        <location evidence="1">Myofibril</location>
        <location evidence="1">Sarcomere</location>
    </subcellularLocation>
    <subcellularLocation>
        <location evidence="1">Cytoplasm</location>
        <location evidence="1">Cytoskeleton</location>
    </subcellularLocation>
    <text evidence="1">Localized to the I-band of the sarcomere and to a lesser extent to the sarcomeric structure between Z-lines.</text>
</comment>
<comment type="tissue specificity">
    <text evidence="4">Expressed specifically in heart and skeletal muscle.</text>
</comment>
<comment type="developmental stage">
    <text evidence="4">At 8.75 dpc, expressed in the primitive heart tube. Thereafter, expression is maintained in heart and is also detected in skeletal muscle after 10.5 dpc.</text>
</comment>
<comment type="domain">
    <text evidence="1">The actin-binding domain 1 (ABD1) is intrinsically disordered, and binds to F-actin with higher affinity than ABD2.</text>
</comment>
<organism>
    <name type="scientific">Mus musculus</name>
    <name type="common">Mouse</name>
    <dbReference type="NCBI Taxonomy" id="10090"/>
    <lineage>
        <taxon>Eukaryota</taxon>
        <taxon>Metazoa</taxon>
        <taxon>Chordata</taxon>
        <taxon>Craniata</taxon>
        <taxon>Vertebrata</taxon>
        <taxon>Euteleostomi</taxon>
        <taxon>Mammalia</taxon>
        <taxon>Eutheria</taxon>
        <taxon>Euarchontoglires</taxon>
        <taxon>Glires</taxon>
        <taxon>Rodentia</taxon>
        <taxon>Myomorpha</taxon>
        <taxon>Muroidea</taxon>
        <taxon>Muridae</taxon>
        <taxon>Murinae</taxon>
        <taxon>Mus</taxon>
        <taxon>Mus</taxon>
    </lineage>
</organism>
<reference evidence="6 7" key="1">
    <citation type="journal article" date="2002" name="J. Biol. Chem.">
        <title>STARS, a striated muscle activator of Rho signaling and serum response factor-dependent transcription.</title>
        <authorList>
            <person name="Arai A."/>
            <person name="Spencer J.A."/>
            <person name="Olson E.N."/>
        </authorList>
    </citation>
    <scope>NUCLEOTIDE SEQUENCE [MRNA]</scope>
    <scope>FUNCTION</scope>
    <scope>INTERACTION WITH ACTIN</scope>
    <scope>TISSUE SPECIFICITY</scope>
    <scope>DEVELOPMENTAL STAGE</scope>
</reference>
<reference evidence="9" key="2">
    <citation type="journal article" date="2005" name="Science">
        <title>The transcriptional landscape of the mammalian genome.</title>
        <authorList>
            <person name="Carninci P."/>
            <person name="Kasukawa T."/>
            <person name="Katayama S."/>
            <person name="Gough J."/>
            <person name="Frith M.C."/>
            <person name="Maeda N."/>
            <person name="Oyama R."/>
            <person name="Ravasi T."/>
            <person name="Lenhard B."/>
            <person name="Wells C."/>
            <person name="Kodzius R."/>
            <person name="Shimokawa K."/>
            <person name="Bajic V.B."/>
            <person name="Brenner S.E."/>
            <person name="Batalov S."/>
            <person name="Forrest A.R."/>
            <person name="Zavolan M."/>
            <person name="Davis M.J."/>
            <person name="Wilming L.G."/>
            <person name="Aidinis V."/>
            <person name="Allen J.E."/>
            <person name="Ambesi-Impiombato A."/>
            <person name="Apweiler R."/>
            <person name="Aturaliya R.N."/>
            <person name="Bailey T.L."/>
            <person name="Bansal M."/>
            <person name="Baxter L."/>
            <person name="Beisel K.W."/>
            <person name="Bersano T."/>
            <person name="Bono H."/>
            <person name="Chalk A.M."/>
            <person name="Chiu K.P."/>
            <person name="Choudhary V."/>
            <person name="Christoffels A."/>
            <person name="Clutterbuck D.R."/>
            <person name="Crowe M.L."/>
            <person name="Dalla E."/>
            <person name="Dalrymple B.P."/>
            <person name="de Bono B."/>
            <person name="Della Gatta G."/>
            <person name="di Bernardo D."/>
            <person name="Down T."/>
            <person name="Engstrom P."/>
            <person name="Fagiolini M."/>
            <person name="Faulkner G."/>
            <person name="Fletcher C.F."/>
            <person name="Fukushima T."/>
            <person name="Furuno M."/>
            <person name="Futaki S."/>
            <person name="Gariboldi M."/>
            <person name="Georgii-Hemming P."/>
            <person name="Gingeras T.R."/>
            <person name="Gojobori T."/>
            <person name="Green R.E."/>
            <person name="Gustincich S."/>
            <person name="Harbers M."/>
            <person name="Hayashi Y."/>
            <person name="Hensch T.K."/>
            <person name="Hirokawa N."/>
            <person name="Hill D."/>
            <person name="Huminiecki L."/>
            <person name="Iacono M."/>
            <person name="Ikeo K."/>
            <person name="Iwama A."/>
            <person name="Ishikawa T."/>
            <person name="Jakt M."/>
            <person name="Kanapin A."/>
            <person name="Katoh M."/>
            <person name="Kawasawa Y."/>
            <person name="Kelso J."/>
            <person name="Kitamura H."/>
            <person name="Kitano H."/>
            <person name="Kollias G."/>
            <person name="Krishnan S.P."/>
            <person name="Kruger A."/>
            <person name="Kummerfeld S.K."/>
            <person name="Kurochkin I.V."/>
            <person name="Lareau L.F."/>
            <person name="Lazarevic D."/>
            <person name="Lipovich L."/>
            <person name="Liu J."/>
            <person name="Liuni S."/>
            <person name="McWilliam S."/>
            <person name="Madan Babu M."/>
            <person name="Madera M."/>
            <person name="Marchionni L."/>
            <person name="Matsuda H."/>
            <person name="Matsuzawa S."/>
            <person name="Miki H."/>
            <person name="Mignone F."/>
            <person name="Miyake S."/>
            <person name="Morris K."/>
            <person name="Mottagui-Tabar S."/>
            <person name="Mulder N."/>
            <person name="Nakano N."/>
            <person name="Nakauchi H."/>
            <person name="Ng P."/>
            <person name="Nilsson R."/>
            <person name="Nishiguchi S."/>
            <person name="Nishikawa S."/>
            <person name="Nori F."/>
            <person name="Ohara O."/>
            <person name="Okazaki Y."/>
            <person name="Orlando V."/>
            <person name="Pang K.C."/>
            <person name="Pavan W.J."/>
            <person name="Pavesi G."/>
            <person name="Pesole G."/>
            <person name="Petrovsky N."/>
            <person name="Piazza S."/>
            <person name="Reed J."/>
            <person name="Reid J.F."/>
            <person name="Ring B.Z."/>
            <person name="Ringwald M."/>
            <person name="Rost B."/>
            <person name="Ruan Y."/>
            <person name="Salzberg S.L."/>
            <person name="Sandelin A."/>
            <person name="Schneider C."/>
            <person name="Schoenbach C."/>
            <person name="Sekiguchi K."/>
            <person name="Semple C.A."/>
            <person name="Seno S."/>
            <person name="Sessa L."/>
            <person name="Sheng Y."/>
            <person name="Shibata Y."/>
            <person name="Shimada H."/>
            <person name="Shimada K."/>
            <person name="Silva D."/>
            <person name="Sinclair B."/>
            <person name="Sperling S."/>
            <person name="Stupka E."/>
            <person name="Sugiura K."/>
            <person name="Sultana R."/>
            <person name="Takenaka Y."/>
            <person name="Taki K."/>
            <person name="Tammoja K."/>
            <person name="Tan S.L."/>
            <person name="Tang S."/>
            <person name="Taylor M.S."/>
            <person name="Tegner J."/>
            <person name="Teichmann S.A."/>
            <person name="Ueda H.R."/>
            <person name="van Nimwegen E."/>
            <person name="Verardo R."/>
            <person name="Wei C.L."/>
            <person name="Yagi K."/>
            <person name="Yamanishi H."/>
            <person name="Zabarovsky E."/>
            <person name="Zhu S."/>
            <person name="Zimmer A."/>
            <person name="Hide W."/>
            <person name="Bult C."/>
            <person name="Grimmond S.M."/>
            <person name="Teasdale R.D."/>
            <person name="Liu E.T."/>
            <person name="Brusic V."/>
            <person name="Quackenbush J."/>
            <person name="Wahlestedt C."/>
            <person name="Mattick J.S."/>
            <person name="Hume D.A."/>
            <person name="Kai C."/>
            <person name="Sasaki D."/>
            <person name="Tomaru Y."/>
            <person name="Fukuda S."/>
            <person name="Kanamori-Katayama M."/>
            <person name="Suzuki M."/>
            <person name="Aoki J."/>
            <person name="Arakawa T."/>
            <person name="Iida J."/>
            <person name="Imamura K."/>
            <person name="Itoh M."/>
            <person name="Kato T."/>
            <person name="Kawaji H."/>
            <person name="Kawagashira N."/>
            <person name="Kawashima T."/>
            <person name="Kojima M."/>
            <person name="Kondo S."/>
            <person name="Konno H."/>
            <person name="Nakano K."/>
            <person name="Ninomiya N."/>
            <person name="Nishio T."/>
            <person name="Okada M."/>
            <person name="Plessy C."/>
            <person name="Shibata K."/>
            <person name="Shiraki T."/>
            <person name="Suzuki S."/>
            <person name="Tagami M."/>
            <person name="Waki K."/>
            <person name="Watahiki A."/>
            <person name="Okamura-Oho Y."/>
            <person name="Suzuki H."/>
            <person name="Kawai J."/>
            <person name="Hayashizaki Y."/>
        </authorList>
    </citation>
    <scope>NUCLEOTIDE SEQUENCE [LARGE SCALE MRNA]</scope>
    <source>
        <strain evidence="9">C57BL/6J</strain>
        <tissue evidence="8">Embryo</tissue>
        <tissue evidence="9">Embryonic head</tissue>
    </source>
</reference>
<reference key="3">
    <citation type="journal article" date="2004" name="Genome Res.">
        <title>The status, quality, and expansion of the NIH full-length cDNA project: the Mammalian Gene Collection (MGC).</title>
        <authorList>
            <consortium name="The MGC Project Team"/>
        </authorList>
    </citation>
    <scope>NUCLEOTIDE SEQUENCE [LARGE SCALE MRNA]</scope>
    <source>
        <tissue>Brain</tissue>
    </source>
</reference>
<reference evidence="6" key="4">
    <citation type="journal article" date="2005" name="Mol. Cell. Biol.">
        <title>Muscle-specific signaling mechanism that links actin dynamics to serum response factor.</title>
        <authorList>
            <person name="Kuwahara K."/>
            <person name="Barrientos T."/>
            <person name="Teg Pipes G.C."/>
            <person name="Li S."/>
            <person name="Olson E.N."/>
        </authorList>
    </citation>
    <scope>FUNCTION</scope>
</reference>
<reference key="5">
    <citation type="journal article" date="2007" name="J. Biol. Chem.">
        <title>Two novel members of the ABLIM protein family, ABLIM-2 and -3, associate with STARS and directly bind F-actin.</title>
        <authorList>
            <person name="Barrientos T."/>
            <person name="Frank D."/>
            <person name="Kuwahara K."/>
            <person name="Bezprozvannaya S."/>
            <person name="Pipes G.C.T."/>
            <person name="Bassel-Duby R."/>
            <person name="Richardson J.A."/>
            <person name="Katus H.A."/>
            <person name="Olson E.N."/>
            <person name="Frey N."/>
        </authorList>
    </citation>
    <scope>INTERACTION WITH ABLIM1; ABLIM2 AND ABLIM3</scope>
</reference>
<gene>
    <name evidence="10" type="primary">Abra</name>
</gene>
<keyword id="KW-0009">Actin-binding</keyword>
<keyword id="KW-0010">Activator</keyword>
<keyword id="KW-0963">Cytoplasm</keyword>
<keyword id="KW-0206">Cytoskeleton</keyword>
<keyword id="KW-0597">Phosphoprotein</keyword>
<keyword id="KW-0653">Protein transport</keyword>
<keyword id="KW-1185">Reference proteome</keyword>
<keyword id="KW-0804">Transcription</keyword>
<keyword id="KW-0805">Transcription regulation</keyword>
<keyword id="KW-0811">Translocation</keyword>
<keyword id="KW-0813">Transport</keyword>
<name>ABRA_MOUSE</name>